<reference key="1">
    <citation type="submission" date="2006-08" db="EMBL/GenBank/DDBJ databases">
        <title>Complete sequence of Shewanella sp. MR-4.</title>
        <authorList>
            <consortium name="US DOE Joint Genome Institute"/>
            <person name="Copeland A."/>
            <person name="Lucas S."/>
            <person name="Lapidus A."/>
            <person name="Barry K."/>
            <person name="Detter J.C."/>
            <person name="Glavina del Rio T."/>
            <person name="Hammon N."/>
            <person name="Israni S."/>
            <person name="Dalin E."/>
            <person name="Tice H."/>
            <person name="Pitluck S."/>
            <person name="Kiss H."/>
            <person name="Brettin T."/>
            <person name="Bruce D."/>
            <person name="Han C."/>
            <person name="Tapia R."/>
            <person name="Gilna P."/>
            <person name="Schmutz J."/>
            <person name="Larimer F."/>
            <person name="Land M."/>
            <person name="Hauser L."/>
            <person name="Kyrpides N."/>
            <person name="Mikhailova N."/>
            <person name="Nealson K."/>
            <person name="Konstantinidis K."/>
            <person name="Klappenbach J."/>
            <person name="Tiedje J."/>
            <person name="Richardson P."/>
        </authorList>
    </citation>
    <scope>NUCLEOTIDE SEQUENCE [LARGE SCALE GENOMIC DNA]</scope>
    <source>
        <strain>MR-4</strain>
    </source>
</reference>
<proteinExistence type="inferred from homology"/>
<keyword id="KW-0963">Cytoplasm</keyword>
<keyword id="KW-0312">Gluconeogenesis</keyword>
<keyword id="KW-0324">Glycolysis</keyword>
<keyword id="KW-0413">Isomerase</keyword>
<sequence>MTILTQSTTWQALAAHSHQIPHMRELFAGDPARFSNMSLSTCGLFLDYSKNRATPETLNLLQTLAQEAKLDAKIKAMFAGDIINTTEKRAVLHTALRSTAEQSIVAEGQDIVPEVQQTLNKMQQFVTSVTSGQWKGFTGKAITDIVSIGIGGSFLGPKIVSQALRPYWITGLNCHFVANVDGTSISEKLKLLDPETTLFIMSSKSFGTQETLTNTLTAKAWFLAKGGSQSDVAKHFVAVTSNVAKATDFGIDADNIFPMWDWVGGRYSLWSAIGLPIALLIGMDNFRSLLKGAHQMDTHFANAPLAENMPVIMGLFSLWYGNFFNAQSHVVLTYDHYLRGLPAYFQQLDMESNGKSVTLNGTHVDYSTGPVIWGGEGTNGQHAYHQLLHQGTALIPADFIMPLQSHNPIGEHHDQLASNCFGQTQALMQGRTLDEALAELSKSSLSDEEKLLIAKHKVMPGNKPSNTLLMDKLTPETLGALIALYEHRTFVQGAIWDINSFDQWGVELGKSLGNDVLARIGAEQDATALDASSNGLINLYRQGKI</sequence>
<protein>
    <recommendedName>
        <fullName evidence="1">Glucose-6-phosphate isomerase</fullName>
        <shortName evidence="1">GPI</shortName>
        <ecNumber evidence="1">5.3.1.9</ecNumber>
    </recommendedName>
    <alternativeName>
        <fullName evidence="1">Phosphoglucose isomerase</fullName>
        <shortName evidence="1">PGI</shortName>
    </alternativeName>
    <alternativeName>
        <fullName evidence="1">Phosphohexose isomerase</fullName>
        <shortName evidence="1">PHI</shortName>
    </alternativeName>
</protein>
<organism>
    <name type="scientific">Shewanella sp. (strain MR-4)</name>
    <dbReference type="NCBI Taxonomy" id="60480"/>
    <lineage>
        <taxon>Bacteria</taxon>
        <taxon>Pseudomonadati</taxon>
        <taxon>Pseudomonadota</taxon>
        <taxon>Gammaproteobacteria</taxon>
        <taxon>Alteromonadales</taxon>
        <taxon>Shewanellaceae</taxon>
        <taxon>Shewanella</taxon>
    </lineage>
</organism>
<dbReference type="EC" id="5.3.1.9" evidence="1"/>
<dbReference type="EMBL" id="CP000446">
    <property type="protein sequence ID" value="ABI40039.1"/>
    <property type="molecule type" value="Genomic_DNA"/>
</dbReference>
<dbReference type="RefSeq" id="WP_011623715.1">
    <property type="nucleotide sequence ID" value="NC_008321.1"/>
</dbReference>
<dbReference type="SMR" id="Q0HFX8"/>
<dbReference type="KEGG" id="she:Shewmr4_2968"/>
<dbReference type="HOGENOM" id="CLU_017947_3_1_6"/>
<dbReference type="UniPathway" id="UPA00109">
    <property type="reaction ID" value="UER00181"/>
</dbReference>
<dbReference type="UniPathway" id="UPA00138"/>
<dbReference type="GO" id="GO:0005829">
    <property type="term" value="C:cytosol"/>
    <property type="evidence" value="ECO:0007669"/>
    <property type="project" value="TreeGrafter"/>
</dbReference>
<dbReference type="GO" id="GO:0097367">
    <property type="term" value="F:carbohydrate derivative binding"/>
    <property type="evidence" value="ECO:0007669"/>
    <property type="project" value="InterPro"/>
</dbReference>
<dbReference type="GO" id="GO:0004347">
    <property type="term" value="F:glucose-6-phosphate isomerase activity"/>
    <property type="evidence" value="ECO:0007669"/>
    <property type="project" value="UniProtKB-UniRule"/>
</dbReference>
<dbReference type="GO" id="GO:0048029">
    <property type="term" value="F:monosaccharide binding"/>
    <property type="evidence" value="ECO:0007669"/>
    <property type="project" value="TreeGrafter"/>
</dbReference>
<dbReference type="GO" id="GO:0006094">
    <property type="term" value="P:gluconeogenesis"/>
    <property type="evidence" value="ECO:0007669"/>
    <property type="project" value="UniProtKB-UniRule"/>
</dbReference>
<dbReference type="GO" id="GO:0051156">
    <property type="term" value="P:glucose 6-phosphate metabolic process"/>
    <property type="evidence" value="ECO:0007669"/>
    <property type="project" value="TreeGrafter"/>
</dbReference>
<dbReference type="GO" id="GO:0006096">
    <property type="term" value="P:glycolytic process"/>
    <property type="evidence" value="ECO:0007669"/>
    <property type="project" value="UniProtKB-UniRule"/>
</dbReference>
<dbReference type="CDD" id="cd05015">
    <property type="entry name" value="SIS_PGI_1"/>
    <property type="match status" value="1"/>
</dbReference>
<dbReference type="CDD" id="cd05016">
    <property type="entry name" value="SIS_PGI_2"/>
    <property type="match status" value="1"/>
</dbReference>
<dbReference type="FunFam" id="3.40.50.10490:FF:000018">
    <property type="entry name" value="Glucose-6-phosphate isomerase"/>
    <property type="match status" value="1"/>
</dbReference>
<dbReference type="Gene3D" id="1.10.1390.10">
    <property type="match status" value="1"/>
</dbReference>
<dbReference type="Gene3D" id="3.40.50.10490">
    <property type="entry name" value="Glucose-6-phosphate isomerase like protein, domain 1"/>
    <property type="match status" value="2"/>
</dbReference>
<dbReference type="HAMAP" id="MF_00473">
    <property type="entry name" value="G6P_isomerase"/>
    <property type="match status" value="1"/>
</dbReference>
<dbReference type="InterPro" id="IPR001672">
    <property type="entry name" value="G6P_Isomerase"/>
</dbReference>
<dbReference type="InterPro" id="IPR023096">
    <property type="entry name" value="G6P_Isomerase_C"/>
</dbReference>
<dbReference type="InterPro" id="IPR018189">
    <property type="entry name" value="Phosphoglucose_isomerase_CS"/>
</dbReference>
<dbReference type="InterPro" id="IPR046348">
    <property type="entry name" value="SIS_dom_sf"/>
</dbReference>
<dbReference type="InterPro" id="IPR035476">
    <property type="entry name" value="SIS_PGI_1"/>
</dbReference>
<dbReference type="InterPro" id="IPR035482">
    <property type="entry name" value="SIS_PGI_2"/>
</dbReference>
<dbReference type="NCBIfam" id="NF001211">
    <property type="entry name" value="PRK00179.1"/>
    <property type="match status" value="1"/>
</dbReference>
<dbReference type="PANTHER" id="PTHR11469">
    <property type="entry name" value="GLUCOSE-6-PHOSPHATE ISOMERASE"/>
    <property type="match status" value="1"/>
</dbReference>
<dbReference type="PANTHER" id="PTHR11469:SF1">
    <property type="entry name" value="GLUCOSE-6-PHOSPHATE ISOMERASE"/>
    <property type="match status" value="1"/>
</dbReference>
<dbReference type="Pfam" id="PF00342">
    <property type="entry name" value="PGI"/>
    <property type="match status" value="1"/>
</dbReference>
<dbReference type="PRINTS" id="PR00662">
    <property type="entry name" value="G6PISOMERASE"/>
</dbReference>
<dbReference type="SUPFAM" id="SSF53697">
    <property type="entry name" value="SIS domain"/>
    <property type="match status" value="1"/>
</dbReference>
<dbReference type="PROSITE" id="PS00765">
    <property type="entry name" value="P_GLUCOSE_ISOMERASE_1"/>
    <property type="match status" value="1"/>
</dbReference>
<dbReference type="PROSITE" id="PS00174">
    <property type="entry name" value="P_GLUCOSE_ISOMERASE_2"/>
    <property type="match status" value="1"/>
</dbReference>
<dbReference type="PROSITE" id="PS51463">
    <property type="entry name" value="P_GLUCOSE_ISOMERASE_3"/>
    <property type="match status" value="1"/>
</dbReference>
<feature type="chain" id="PRO_1000014018" description="Glucose-6-phosphate isomerase">
    <location>
        <begin position="1"/>
        <end position="545"/>
    </location>
</feature>
<feature type="active site" description="Proton donor" evidence="1">
    <location>
        <position position="351"/>
    </location>
</feature>
<feature type="active site" evidence="1">
    <location>
        <position position="382"/>
    </location>
</feature>
<feature type="active site" evidence="1">
    <location>
        <position position="510"/>
    </location>
</feature>
<evidence type="ECO:0000255" key="1">
    <source>
        <dbReference type="HAMAP-Rule" id="MF_00473"/>
    </source>
</evidence>
<name>G6PI_SHESM</name>
<gene>
    <name evidence="1" type="primary">pgi</name>
    <name type="ordered locus">Shewmr4_2968</name>
</gene>
<accession>Q0HFX8</accession>
<comment type="function">
    <text evidence="1">Catalyzes the reversible isomerization of glucose-6-phosphate to fructose-6-phosphate.</text>
</comment>
<comment type="catalytic activity">
    <reaction evidence="1">
        <text>alpha-D-glucose 6-phosphate = beta-D-fructose 6-phosphate</text>
        <dbReference type="Rhea" id="RHEA:11816"/>
        <dbReference type="ChEBI" id="CHEBI:57634"/>
        <dbReference type="ChEBI" id="CHEBI:58225"/>
        <dbReference type="EC" id="5.3.1.9"/>
    </reaction>
</comment>
<comment type="pathway">
    <text evidence="1">Carbohydrate biosynthesis; gluconeogenesis.</text>
</comment>
<comment type="pathway">
    <text evidence="1">Carbohydrate degradation; glycolysis; D-glyceraldehyde 3-phosphate and glycerone phosphate from D-glucose: step 2/4.</text>
</comment>
<comment type="subcellular location">
    <subcellularLocation>
        <location evidence="1">Cytoplasm</location>
    </subcellularLocation>
</comment>
<comment type="similarity">
    <text evidence="1">Belongs to the GPI family.</text>
</comment>